<keyword id="KW-0963">Cytoplasm</keyword>
<keyword id="KW-0648">Protein biosynthesis</keyword>
<keyword id="KW-1185">Reference proteome</keyword>
<proteinExistence type="inferred from homology"/>
<feature type="chain" id="PRO_0000167586" description="Ribosome-recycling factor">
    <location>
        <begin position="1"/>
        <end position="185"/>
    </location>
</feature>
<sequence length="185" mass="20630">MLNQIKQDAQDRMTKSIDALRNSLASVRTGRASPSLLDGIKIKAYGTDTPLNQVASISVSEGRSLVITVFDKNMSKDVEKAIYASDLGLTPTVVGTLIRLNLPPLTEERRKELTKVVHSEGEDTKVAIRNIRRDANQQIKDMLKSKEITEDEVRHGEEDIQKLTDKAIKSVDEVVKSKEQELMTV</sequence>
<gene>
    <name evidence="1" type="primary">frr</name>
    <name type="ordered locus">PD_0331</name>
</gene>
<organism>
    <name type="scientific">Xylella fastidiosa (strain Temecula1 / ATCC 700964)</name>
    <dbReference type="NCBI Taxonomy" id="183190"/>
    <lineage>
        <taxon>Bacteria</taxon>
        <taxon>Pseudomonadati</taxon>
        <taxon>Pseudomonadota</taxon>
        <taxon>Gammaproteobacteria</taxon>
        <taxon>Lysobacterales</taxon>
        <taxon>Lysobacteraceae</taxon>
        <taxon>Xylella</taxon>
    </lineage>
</organism>
<name>RRF_XYLFT</name>
<comment type="function">
    <text evidence="1">Responsible for the release of ribosomes from messenger RNA at the termination of protein biosynthesis. May increase the efficiency of translation by recycling ribosomes from one round of translation to another.</text>
</comment>
<comment type="subcellular location">
    <subcellularLocation>
        <location evidence="1">Cytoplasm</location>
    </subcellularLocation>
</comment>
<comment type="similarity">
    <text evidence="1">Belongs to the RRF family.</text>
</comment>
<protein>
    <recommendedName>
        <fullName evidence="1">Ribosome-recycling factor</fullName>
        <shortName evidence="1">RRF</shortName>
    </recommendedName>
    <alternativeName>
        <fullName evidence="1">Ribosome-releasing factor</fullName>
    </alternativeName>
</protein>
<evidence type="ECO:0000255" key="1">
    <source>
        <dbReference type="HAMAP-Rule" id="MF_00040"/>
    </source>
</evidence>
<reference key="1">
    <citation type="journal article" date="2003" name="J. Bacteriol.">
        <title>Comparative analyses of the complete genome sequences of Pierce's disease and citrus variegated chlorosis strains of Xylella fastidiosa.</title>
        <authorList>
            <person name="Van Sluys M.A."/>
            <person name="de Oliveira M.C."/>
            <person name="Monteiro-Vitorello C.B."/>
            <person name="Miyaki C.Y."/>
            <person name="Furlan L.R."/>
            <person name="Camargo L.E.A."/>
            <person name="da Silva A.C.R."/>
            <person name="Moon D.H."/>
            <person name="Takita M.A."/>
            <person name="Lemos E.G.M."/>
            <person name="Machado M.A."/>
            <person name="Ferro M.I.T."/>
            <person name="da Silva F.R."/>
            <person name="Goldman M.H.S."/>
            <person name="Goldman G.H."/>
            <person name="Lemos M.V.F."/>
            <person name="El-Dorry H."/>
            <person name="Tsai S.M."/>
            <person name="Carrer H."/>
            <person name="Carraro D.M."/>
            <person name="de Oliveira R.C."/>
            <person name="Nunes L.R."/>
            <person name="Siqueira W.J."/>
            <person name="Coutinho L.L."/>
            <person name="Kimura E.T."/>
            <person name="Ferro E.S."/>
            <person name="Harakava R."/>
            <person name="Kuramae E.E."/>
            <person name="Marino C.L."/>
            <person name="Giglioti E."/>
            <person name="Abreu I.L."/>
            <person name="Alves L.M.C."/>
            <person name="do Amaral A.M."/>
            <person name="Baia G.S."/>
            <person name="Blanco S.R."/>
            <person name="Brito M.S."/>
            <person name="Cannavan F.S."/>
            <person name="Celestino A.V."/>
            <person name="da Cunha A.F."/>
            <person name="Fenille R.C."/>
            <person name="Ferro J.A."/>
            <person name="Formighieri E.F."/>
            <person name="Kishi L.T."/>
            <person name="Leoni S.G."/>
            <person name="Oliveira A.R."/>
            <person name="Rosa V.E. Jr."/>
            <person name="Sassaki F.T."/>
            <person name="Sena J.A.D."/>
            <person name="de Souza A.A."/>
            <person name="Truffi D."/>
            <person name="Tsukumo F."/>
            <person name="Yanai G.M."/>
            <person name="Zaros L.G."/>
            <person name="Civerolo E.L."/>
            <person name="Simpson A.J.G."/>
            <person name="Almeida N.F. Jr."/>
            <person name="Setubal J.C."/>
            <person name="Kitajima J.P."/>
        </authorList>
    </citation>
    <scope>NUCLEOTIDE SEQUENCE [LARGE SCALE GENOMIC DNA]</scope>
    <source>
        <strain>Temecula1 / ATCC 700964</strain>
    </source>
</reference>
<dbReference type="EMBL" id="AE009442">
    <property type="protein sequence ID" value="AAO28215.1"/>
    <property type="molecule type" value="Genomic_DNA"/>
</dbReference>
<dbReference type="RefSeq" id="WP_004089320.1">
    <property type="nucleotide sequence ID" value="NC_004556.1"/>
</dbReference>
<dbReference type="SMR" id="Q87EH6"/>
<dbReference type="GeneID" id="93904032"/>
<dbReference type="KEGG" id="xft:PD_0331"/>
<dbReference type="HOGENOM" id="CLU_073981_2_0_6"/>
<dbReference type="Proteomes" id="UP000002516">
    <property type="component" value="Chromosome"/>
</dbReference>
<dbReference type="GO" id="GO:0005829">
    <property type="term" value="C:cytosol"/>
    <property type="evidence" value="ECO:0007669"/>
    <property type="project" value="GOC"/>
</dbReference>
<dbReference type="GO" id="GO:0043023">
    <property type="term" value="F:ribosomal large subunit binding"/>
    <property type="evidence" value="ECO:0007669"/>
    <property type="project" value="TreeGrafter"/>
</dbReference>
<dbReference type="GO" id="GO:0002184">
    <property type="term" value="P:cytoplasmic translational termination"/>
    <property type="evidence" value="ECO:0007669"/>
    <property type="project" value="TreeGrafter"/>
</dbReference>
<dbReference type="CDD" id="cd00520">
    <property type="entry name" value="RRF"/>
    <property type="match status" value="1"/>
</dbReference>
<dbReference type="FunFam" id="1.10.132.20:FF:000001">
    <property type="entry name" value="Ribosome-recycling factor"/>
    <property type="match status" value="1"/>
</dbReference>
<dbReference type="FunFam" id="3.30.1360.40:FF:000001">
    <property type="entry name" value="Ribosome-recycling factor"/>
    <property type="match status" value="1"/>
</dbReference>
<dbReference type="Gene3D" id="3.30.1360.40">
    <property type="match status" value="1"/>
</dbReference>
<dbReference type="Gene3D" id="1.10.132.20">
    <property type="entry name" value="Ribosome-recycling factor"/>
    <property type="match status" value="1"/>
</dbReference>
<dbReference type="HAMAP" id="MF_00040">
    <property type="entry name" value="RRF"/>
    <property type="match status" value="1"/>
</dbReference>
<dbReference type="InterPro" id="IPR002661">
    <property type="entry name" value="Ribosome_recyc_fac"/>
</dbReference>
<dbReference type="InterPro" id="IPR023584">
    <property type="entry name" value="Ribosome_recyc_fac_dom"/>
</dbReference>
<dbReference type="InterPro" id="IPR036191">
    <property type="entry name" value="RRF_sf"/>
</dbReference>
<dbReference type="NCBIfam" id="TIGR00496">
    <property type="entry name" value="frr"/>
    <property type="match status" value="1"/>
</dbReference>
<dbReference type="PANTHER" id="PTHR20982:SF3">
    <property type="entry name" value="MITOCHONDRIAL RIBOSOME RECYCLING FACTOR PSEUDO 1"/>
    <property type="match status" value="1"/>
</dbReference>
<dbReference type="PANTHER" id="PTHR20982">
    <property type="entry name" value="RIBOSOME RECYCLING FACTOR"/>
    <property type="match status" value="1"/>
</dbReference>
<dbReference type="Pfam" id="PF01765">
    <property type="entry name" value="RRF"/>
    <property type="match status" value="1"/>
</dbReference>
<dbReference type="SUPFAM" id="SSF55194">
    <property type="entry name" value="Ribosome recycling factor, RRF"/>
    <property type="match status" value="1"/>
</dbReference>
<accession>Q87EH6</accession>